<gene>
    <name evidence="1" type="primary">atpG</name>
    <name type="ordered locus">LBL_1972</name>
</gene>
<protein>
    <recommendedName>
        <fullName evidence="1">ATP synthase gamma chain</fullName>
    </recommendedName>
    <alternativeName>
        <fullName evidence="1">ATP synthase F1 sector gamma subunit</fullName>
    </alternativeName>
    <alternativeName>
        <fullName evidence="1">F-ATPase gamma subunit</fullName>
    </alternativeName>
</protein>
<dbReference type="EMBL" id="CP000348">
    <property type="protein sequence ID" value="ABJ79401.1"/>
    <property type="molecule type" value="Genomic_DNA"/>
</dbReference>
<dbReference type="RefSeq" id="WP_002754308.1">
    <property type="nucleotide sequence ID" value="NC_008508.1"/>
</dbReference>
<dbReference type="SMR" id="Q04ZU4"/>
<dbReference type="KEGG" id="lbl:LBL_1972"/>
<dbReference type="HOGENOM" id="CLU_050669_0_0_12"/>
<dbReference type="GO" id="GO:0005886">
    <property type="term" value="C:plasma membrane"/>
    <property type="evidence" value="ECO:0007669"/>
    <property type="project" value="UniProtKB-SubCell"/>
</dbReference>
<dbReference type="GO" id="GO:0045259">
    <property type="term" value="C:proton-transporting ATP synthase complex"/>
    <property type="evidence" value="ECO:0007669"/>
    <property type="project" value="UniProtKB-KW"/>
</dbReference>
<dbReference type="GO" id="GO:0005524">
    <property type="term" value="F:ATP binding"/>
    <property type="evidence" value="ECO:0007669"/>
    <property type="project" value="UniProtKB-UniRule"/>
</dbReference>
<dbReference type="GO" id="GO:0046933">
    <property type="term" value="F:proton-transporting ATP synthase activity, rotational mechanism"/>
    <property type="evidence" value="ECO:0007669"/>
    <property type="project" value="UniProtKB-UniRule"/>
</dbReference>
<dbReference type="GO" id="GO:0042777">
    <property type="term" value="P:proton motive force-driven plasma membrane ATP synthesis"/>
    <property type="evidence" value="ECO:0007669"/>
    <property type="project" value="UniProtKB-UniRule"/>
</dbReference>
<dbReference type="CDD" id="cd12151">
    <property type="entry name" value="F1-ATPase_gamma"/>
    <property type="match status" value="1"/>
</dbReference>
<dbReference type="FunFam" id="1.10.287.80:FF:000009">
    <property type="entry name" value="ATP synthase gamma chain"/>
    <property type="match status" value="1"/>
</dbReference>
<dbReference type="FunFam" id="3.40.1380.10:FF:000006">
    <property type="entry name" value="ATP synthase gamma chain"/>
    <property type="match status" value="1"/>
</dbReference>
<dbReference type="Gene3D" id="3.40.1380.10">
    <property type="match status" value="1"/>
</dbReference>
<dbReference type="Gene3D" id="1.10.287.80">
    <property type="entry name" value="ATP synthase, gamma subunit, helix hairpin domain"/>
    <property type="match status" value="1"/>
</dbReference>
<dbReference type="HAMAP" id="MF_00815">
    <property type="entry name" value="ATP_synth_gamma_bact"/>
    <property type="match status" value="1"/>
</dbReference>
<dbReference type="InterPro" id="IPR035968">
    <property type="entry name" value="ATP_synth_F1_ATPase_gsu"/>
</dbReference>
<dbReference type="InterPro" id="IPR000131">
    <property type="entry name" value="ATP_synth_F1_gsu"/>
</dbReference>
<dbReference type="InterPro" id="IPR023632">
    <property type="entry name" value="ATP_synth_F1_gsu_CS"/>
</dbReference>
<dbReference type="NCBIfam" id="TIGR01146">
    <property type="entry name" value="ATPsyn_F1gamma"/>
    <property type="match status" value="1"/>
</dbReference>
<dbReference type="NCBIfam" id="NF009960">
    <property type="entry name" value="PRK13427.1"/>
    <property type="match status" value="1"/>
</dbReference>
<dbReference type="PANTHER" id="PTHR11693">
    <property type="entry name" value="ATP SYNTHASE GAMMA CHAIN"/>
    <property type="match status" value="1"/>
</dbReference>
<dbReference type="PANTHER" id="PTHR11693:SF22">
    <property type="entry name" value="ATP SYNTHASE SUBUNIT GAMMA, MITOCHONDRIAL"/>
    <property type="match status" value="1"/>
</dbReference>
<dbReference type="Pfam" id="PF00231">
    <property type="entry name" value="ATP-synt"/>
    <property type="match status" value="1"/>
</dbReference>
<dbReference type="PRINTS" id="PR00126">
    <property type="entry name" value="ATPASEGAMMA"/>
</dbReference>
<dbReference type="SUPFAM" id="SSF52943">
    <property type="entry name" value="ATP synthase (F1-ATPase), gamma subunit"/>
    <property type="match status" value="1"/>
</dbReference>
<dbReference type="PROSITE" id="PS00153">
    <property type="entry name" value="ATPASE_GAMMA"/>
    <property type="match status" value="1"/>
</dbReference>
<evidence type="ECO:0000255" key="1">
    <source>
        <dbReference type="HAMAP-Rule" id="MF_00815"/>
    </source>
</evidence>
<comment type="function">
    <text evidence="1">Produces ATP from ADP in the presence of a proton gradient across the membrane. The gamma chain is believed to be important in regulating ATPase activity and the flow of protons through the CF(0) complex.</text>
</comment>
<comment type="subunit">
    <text evidence="1">F-type ATPases have 2 components, CF(1) - the catalytic core - and CF(0) - the membrane proton channel. CF(1) has five subunits: alpha(3), beta(3), gamma(1), delta(1), epsilon(1). CF(0) has three main subunits: a, b and c.</text>
</comment>
<comment type="subcellular location">
    <subcellularLocation>
        <location evidence="1">Cell inner membrane</location>
        <topology evidence="1">Peripheral membrane protein</topology>
    </subcellularLocation>
</comment>
<comment type="similarity">
    <text evidence="1">Belongs to the ATPase gamma chain family.</text>
</comment>
<sequence length="286" mass="31670">MATPREIKKRINSVKNTRKITRTMEMVSTAKSKKISDRVNASHPFSNKIKELVSSLASLSGVVHSPYLRRPEKIKTVALLVITANRGLCGGYNSNVNRLAKAKVAEWKKAGVNVRLFIVGKKGISFFKFAGEKAEKTYTHLDDKSGYKEAEEFANLFLELFANEEVDAVEIASTVYYSSASQKPEVTRILPFEPAKEGNGNDLVVYEPSPERVLESLLPLVVKTAFLKAILEANCSEQIARRIAMKSATDAASEMIKLLTRGYNRVRQAKITQEISEIVAGADSLN</sequence>
<proteinExistence type="inferred from homology"/>
<name>ATPG_LEPBL</name>
<accession>Q04ZU4</accession>
<reference key="1">
    <citation type="journal article" date="2006" name="Proc. Natl. Acad. Sci. U.S.A.">
        <title>Genome reduction in Leptospira borgpetersenii reflects limited transmission potential.</title>
        <authorList>
            <person name="Bulach D.M."/>
            <person name="Zuerner R.L."/>
            <person name="Wilson P."/>
            <person name="Seemann T."/>
            <person name="McGrath A."/>
            <person name="Cullen P.A."/>
            <person name="Davis J."/>
            <person name="Johnson M."/>
            <person name="Kuczek E."/>
            <person name="Alt D.P."/>
            <person name="Peterson-Burch B."/>
            <person name="Coppel R.L."/>
            <person name="Rood J.I."/>
            <person name="Davies J.K."/>
            <person name="Adler B."/>
        </authorList>
    </citation>
    <scope>NUCLEOTIDE SEQUENCE [LARGE SCALE GENOMIC DNA]</scope>
    <source>
        <strain>L550</strain>
    </source>
</reference>
<organism>
    <name type="scientific">Leptospira borgpetersenii serovar Hardjo-bovis (strain L550)</name>
    <dbReference type="NCBI Taxonomy" id="355276"/>
    <lineage>
        <taxon>Bacteria</taxon>
        <taxon>Pseudomonadati</taxon>
        <taxon>Spirochaetota</taxon>
        <taxon>Spirochaetia</taxon>
        <taxon>Leptospirales</taxon>
        <taxon>Leptospiraceae</taxon>
        <taxon>Leptospira</taxon>
    </lineage>
</organism>
<keyword id="KW-0066">ATP synthesis</keyword>
<keyword id="KW-0997">Cell inner membrane</keyword>
<keyword id="KW-1003">Cell membrane</keyword>
<keyword id="KW-0139">CF(1)</keyword>
<keyword id="KW-0375">Hydrogen ion transport</keyword>
<keyword id="KW-0406">Ion transport</keyword>
<keyword id="KW-0472">Membrane</keyword>
<keyword id="KW-0813">Transport</keyword>
<feature type="chain" id="PRO_1000053244" description="ATP synthase gamma chain">
    <location>
        <begin position="1"/>
        <end position="286"/>
    </location>
</feature>